<reference key="1">
    <citation type="journal article" date="2011" name="Appl. Environ. Microbiol.">
        <title>Genomic potential of Marinobacter aquaeolei, a biogeochemical 'opportunitroph'.</title>
        <authorList>
            <person name="Singer E."/>
            <person name="Webb E.A."/>
            <person name="Nelson W.C."/>
            <person name="Heidelberg J.F."/>
            <person name="Ivanova N."/>
            <person name="Pati A."/>
            <person name="Edwards K.J."/>
        </authorList>
    </citation>
    <scope>NUCLEOTIDE SEQUENCE [LARGE SCALE GENOMIC DNA]</scope>
    <source>
        <strain>ATCC 700491 / DSM 11845 / VT8</strain>
    </source>
</reference>
<organism>
    <name type="scientific">Marinobacter nauticus (strain ATCC 700491 / DSM 11845 / VT8)</name>
    <name type="common">Marinobacter aquaeolei</name>
    <dbReference type="NCBI Taxonomy" id="351348"/>
    <lineage>
        <taxon>Bacteria</taxon>
        <taxon>Pseudomonadati</taxon>
        <taxon>Pseudomonadota</taxon>
        <taxon>Gammaproteobacteria</taxon>
        <taxon>Pseudomonadales</taxon>
        <taxon>Marinobacteraceae</taxon>
        <taxon>Marinobacter</taxon>
    </lineage>
</organism>
<evidence type="ECO:0000255" key="1">
    <source>
        <dbReference type="HAMAP-Rule" id="MF_00251"/>
    </source>
</evidence>
<evidence type="ECO:0000305" key="2"/>
<keyword id="KW-0687">Ribonucleoprotein</keyword>
<keyword id="KW-0689">Ribosomal protein</keyword>
<proteinExistence type="inferred from homology"/>
<dbReference type="EMBL" id="CP000514">
    <property type="protein sequence ID" value="ABM17837.1"/>
    <property type="molecule type" value="Genomic_DNA"/>
</dbReference>
<dbReference type="RefSeq" id="WP_008174902.1">
    <property type="nucleotide sequence ID" value="NC_008740.1"/>
</dbReference>
<dbReference type="SMR" id="A1TYL8"/>
<dbReference type="STRING" id="351348.Maqu_0740"/>
<dbReference type="GeneID" id="90606377"/>
<dbReference type="KEGG" id="maq:Maqu_0740"/>
<dbReference type="eggNOG" id="COG0257">
    <property type="taxonomic scope" value="Bacteria"/>
</dbReference>
<dbReference type="HOGENOM" id="CLU_135723_6_2_6"/>
<dbReference type="OrthoDB" id="9802520at2"/>
<dbReference type="Proteomes" id="UP000000998">
    <property type="component" value="Chromosome"/>
</dbReference>
<dbReference type="GO" id="GO:0005737">
    <property type="term" value="C:cytoplasm"/>
    <property type="evidence" value="ECO:0007669"/>
    <property type="project" value="UniProtKB-ARBA"/>
</dbReference>
<dbReference type="GO" id="GO:1990904">
    <property type="term" value="C:ribonucleoprotein complex"/>
    <property type="evidence" value="ECO:0007669"/>
    <property type="project" value="UniProtKB-KW"/>
</dbReference>
<dbReference type="GO" id="GO:0005840">
    <property type="term" value="C:ribosome"/>
    <property type="evidence" value="ECO:0007669"/>
    <property type="project" value="UniProtKB-KW"/>
</dbReference>
<dbReference type="GO" id="GO:0003735">
    <property type="term" value="F:structural constituent of ribosome"/>
    <property type="evidence" value="ECO:0007669"/>
    <property type="project" value="InterPro"/>
</dbReference>
<dbReference type="GO" id="GO:0006412">
    <property type="term" value="P:translation"/>
    <property type="evidence" value="ECO:0007669"/>
    <property type="project" value="UniProtKB-UniRule"/>
</dbReference>
<dbReference type="HAMAP" id="MF_00251">
    <property type="entry name" value="Ribosomal_bL36"/>
    <property type="match status" value="1"/>
</dbReference>
<dbReference type="InterPro" id="IPR000473">
    <property type="entry name" value="Ribosomal_bL36"/>
</dbReference>
<dbReference type="InterPro" id="IPR035977">
    <property type="entry name" value="Ribosomal_bL36_sp"/>
</dbReference>
<dbReference type="NCBIfam" id="TIGR01022">
    <property type="entry name" value="rpmJ_bact"/>
    <property type="match status" value="1"/>
</dbReference>
<dbReference type="PANTHER" id="PTHR42888">
    <property type="entry name" value="50S RIBOSOMAL PROTEIN L36, CHLOROPLASTIC"/>
    <property type="match status" value="1"/>
</dbReference>
<dbReference type="PANTHER" id="PTHR42888:SF1">
    <property type="entry name" value="LARGE RIBOSOMAL SUBUNIT PROTEIN BL36C"/>
    <property type="match status" value="1"/>
</dbReference>
<dbReference type="Pfam" id="PF00444">
    <property type="entry name" value="Ribosomal_L36"/>
    <property type="match status" value="1"/>
</dbReference>
<dbReference type="SUPFAM" id="SSF57840">
    <property type="entry name" value="Ribosomal protein L36"/>
    <property type="match status" value="1"/>
</dbReference>
<dbReference type="PROSITE" id="PS00828">
    <property type="entry name" value="RIBOSOMAL_L36"/>
    <property type="match status" value="1"/>
</dbReference>
<feature type="chain" id="PRO_0000302237" description="Large ribosomal subunit protein bL36">
    <location>
        <begin position="1"/>
        <end position="37"/>
    </location>
</feature>
<protein>
    <recommendedName>
        <fullName evidence="1">Large ribosomal subunit protein bL36</fullName>
    </recommendedName>
    <alternativeName>
        <fullName evidence="2">50S ribosomal protein L36</fullName>
    </alternativeName>
</protein>
<sequence length="37" mass="4322">MKVRASVKKICRNCKVIRRNGSVRVICSEPRHKQRQG</sequence>
<comment type="similarity">
    <text evidence="1">Belongs to the bacterial ribosomal protein bL36 family.</text>
</comment>
<gene>
    <name evidence="1" type="primary">rpmJ</name>
    <name type="ordered locus">Maqu_0740</name>
</gene>
<name>RL36_MARN8</name>
<accession>A1TYL8</accession>